<evidence type="ECO:0000250" key="1"/>
<evidence type="ECO:0000255" key="2"/>
<evidence type="ECO:0000255" key="3">
    <source>
        <dbReference type="PROSITE-ProRule" id="PRU10101"/>
    </source>
</evidence>
<evidence type="ECO:0000305" key="4"/>
<evidence type="ECO:0000305" key="5">
    <source>
    </source>
</evidence>
<protein>
    <recommendedName>
        <fullName>Beta-lactamase</fullName>
        <ecNumber>3.5.2.6</ecNumber>
    </recommendedName>
</protein>
<proteinExistence type="inferred from homology"/>
<accession>P30898</accession>
<sequence length="296" mass="33450">MKAYFIAILTLFTCIATVVRAQQMSELENRIDSLLNGKKATVGIAVWTDKGDMLRYNDHVHFPLLSVFKFHVALAVLDKMDKQSISLDSIVSIKASQMPPNTYSPLRKKFPDQDFTITLRELMQYSISQSDNNACDILIEYAGGIKHINDYIHRLSIDSFNLSETEDGMHSSFEAVYRNWSTPSAMVRLLRTADEKELFSNKELKDFLWQTMIDTETGANKLKGMLPAKTVVGHKTGSSDRNADGMKTADNDAGLVILPDGRKYYIAAFVMDSYETDEDNANIIARISRMVYDAMR</sequence>
<name>BLAC_BACUN</name>
<gene>
    <name type="primary">cblA</name>
</gene>
<reference key="1">
    <citation type="journal article" date="1994" name="Antimicrob. Agents Chemother.">
        <title>Molecular and genetic analysis of the Bacteroides uniformis cephalosporinase gene, cblA, encoding the species-specific beta-lactamase.</title>
        <authorList>
            <person name="Smith C.J."/>
            <person name="Bennett T.K."/>
            <person name="Parker A.C."/>
        </authorList>
    </citation>
    <scope>NUCLEOTIDE SEQUENCE [GENOMIC DNA]</scope>
    <source>
        <strain>WAL-7088</strain>
    </source>
</reference>
<reference key="2">
    <citation type="journal article" date="1991" name="Biochem. J.">
        <title>A standard numbering scheme for the class A beta-lactamases.</title>
        <authorList>
            <person name="Ambler R.P."/>
            <person name="Coulson A.F."/>
            <person name="Frere J.M."/>
            <person name="Ghuysen J.M."/>
            <person name="Joris B."/>
            <person name="Forsman M."/>
            <person name="Levesque R.C."/>
            <person name="Tiraby G."/>
            <person name="Waley S.G."/>
        </authorList>
    </citation>
    <scope>AMINO ACID NUMBERING SCHEME</scope>
</reference>
<feature type="signal peptide" evidence="2">
    <location>
        <begin position="1"/>
        <end position="21"/>
    </location>
</feature>
<feature type="chain" id="PRO_0000017037" description="Beta-lactamase">
    <location>
        <begin position="22"/>
        <end position="296"/>
    </location>
</feature>
<feature type="active site" description="Acyl-ester intermediate" evidence="3">
    <location>
        <position position="66"/>
    </location>
</feature>
<feature type="binding site" evidence="1">
    <location>
        <begin position="235"/>
        <end position="237"/>
    </location>
    <ligand>
        <name>substrate</name>
    </ligand>
</feature>
<dbReference type="EC" id="3.5.2.6"/>
<dbReference type="EMBL" id="L08472">
    <property type="protein sequence ID" value="AAA66962.1"/>
    <property type="molecule type" value="Genomic_DNA"/>
</dbReference>
<dbReference type="PIR" id="I40231">
    <property type="entry name" value="I40231"/>
</dbReference>
<dbReference type="SMR" id="P30898"/>
<dbReference type="STRING" id="820.ERS852554_00192"/>
<dbReference type="CARD" id="ARO:3002999">
    <property type="molecule name" value="CblA-1"/>
    <property type="mechanism identifier" value="ARO:0001004"/>
    <property type="mechanism name" value="antibiotic inactivation"/>
</dbReference>
<dbReference type="GO" id="GO:0008800">
    <property type="term" value="F:beta-lactamase activity"/>
    <property type="evidence" value="ECO:0007669"/>
    <property type="project" value="UniProtKB-EC"/>
</dbReference>
<dbReference type="GO" id="GO:0030655">
    <property type="term" value="P:beta-lactam antibiotic catabolic process"/>
    <property type="evidence" value="ECO:0007669"/>
    <property type="project" value="InterPro"/>
</dbReference>
<dbReference type="GO" id="GO:0046677">
    <property type="term" value="P:response to antibiotic"/>
    <property type="evidence" value="ECO:0007669"/>
    <property type="project" value="UniProtKB-KW"/>
</dbReference>
<dbReference type="Gene3D" id="3.40.710.10">
    <property type="entry name" value="DD-peptidase/beta-lactamase superfamily"/>
    <property type="match status" value="1"/>
</dbReference>
<dbReference type="InterPro" id="IPR012338">
    <property type="entry name" value="Beta-lactam/transpept-like"/>
</dbReference>
<dbReference type="InterPro" id="IPR045155">
    <property type="entry name" value="Beta-lactam_cat"/>
</dbReference>
<dbReference type="InterPro" id="IPR000871">
    <property type="entry name" value="Beta-lactam_class-A"/>
</dbReference>
<dbReference type="InterPro" id="IPR023650">
    <property type="entry name" value="Beta-lactam_class-A_AS"/>
</dbReference>
<dbReference type="NCBIfam" id="NF033098">
    <property type="entry name" value="bla_CblA"/>
    <property type="match status" value="1"/>
</dbReference>
<dbReference type="NCBIfam" id="NF033103">
    <property type="entry name" value="bla_class_A"/>
    <property type="match status" value="1"/>
</dbReference>
<dbReference type="NCBIfam" id="NF012099">
    <property type="entry name" value="SubclassA2"/>
    <property type="match status" value="1"/>
</dbReference>
<dbReference type="PANTHER" id="PTHR35333">
    <property type="entry name" value="BETA-LACTAMASE"/>
    <property type="match status" value="1"/>
</dbReference>
<dbReference type="PANTHER" id="PTHR35333:SF3">
    <property type="entry name" value="BETA-LACTAMASE-TYPE TRANSPEPTIDASE FOLD CONTAINING PROTEIN"/>
    <property type="match status" value="1"/>
</dbReference>
<dbReference type="Pfam" id="PF13354">
    <property type="entry name" value="Beta-lactamase2"/>
    <property type="match status" value="1"/>
</dbReference>
<dbReference type="PRINTS" id="PR00118">
    <property type="entry name" value="BLACTAMASEA"/>
</dbReference>
<dbReference type="SUPFAM" id="SSF56601">
    <property type="entry name" value="beta-lactamase/transpeptidase-like"/>
    <property type="match status" value="1"/>
</dbReference>
<dbReference type="PROSITE" id="PS00146">
    <property type="entry name" value="BETA_LACTAMASE_A"/>
    <property type="match status" value="1"/>
</dbReference>
<organism>
    <name type="scientific">Bacteroides uniformis</name>
    <dbReference type="NCBI Taxonomy" id="820"/>
    <lineage>
        <taxon>Bacteria</taxon>
        <taxon>Pseudomonadati</taxon>
        <taxon>Bacteroidota</taxon>
        <taxon>Bacteroidia</taxon>
        <taxon>Bacteroidales</taxon>
        <taxon>Bacteroidaceae</taxon>
        <taxon>Bacteroides</taxon>
    </lineage>
</organism>
<comment type="catalytic activity">
    <reaction evidence="3">
        <text>a beta-lactam + H2O = a substituted beta-amino acid</text>
        <dbReference type="Rhea" id="RHEA:20401"/>
        <dbReference type="ChEBI" id="CHEBI:15377"/>
        <dbReference type="ChEBI" id="CHEBI:35627"/>
        <dbReference type="ChEBI" id="CHEBI:140347"/>
        <dbReference type="EC" id="3.5.2.6"/>
    </reaction>
</comment>
<comment type="miscellaneous">
    <text evidence="5">The class A beta-lactamase family has a specific amino-acid numbering system, sometimes called Ambler or ABL numbering and often misspelt as Amber. A multiple sequence alignment was used to derive a consensus sequence and then the consensus was numbered taking into account insertions and deletions. This allows use of identical numbers, e.g. for active site residues, despite differences in protein length. UniProt always uses natural numbering of residues, hence there appear to be differences in numbering between this entry and some papers.</text>
</comment>
<comment type="similarity">
    <text evidence="4">Belongs to the class-A beta-lactamase family.</text>
</comment>
<keyword id="KW-0046">Antibiotic resistance</keyword>
<keyword id="KW-0378">Hydrolase</keyword>
<keyword id="KW-0732">Signal</keyword>